<keyword id="KW-1185">Reference proteome</keyword>
<feature type="chain" id="PRO_0000252178" description="UPF0386 protein YjhX">
    <location>
        <begin position="1"/>
        <end position="85"/>
    </location>
</feature>
<proteinExistence type="inferred from homology"/>
<dbReference type="EMBL" id="U00096">
    <property type="protein sequence ID" value="ABD18718.1"/>
    <property type="molecule type" value="Genomic_DNA"/>
</dbReference>
<dbReference type="EMBL" id="AP009048">
    <property type="protein sequence ID" value="BAE78300.1"/>
    <property type="molecule type" value="Genomic_DNA"/>
</dbReference>
<dbReference type="RefSeq" id="WP_001054376.1">
    <property type="nucleotide sequence ID" value="NZ_SSUV01000012.1"/>
</dbReference>
<dbReference type="RefSeq" id="YP_588477.1">
    <property type="nucleotide sequence ID" value="NC_000913.3"/>
</dbReference>
<dbReference type="FunCoup" id="Q2EEU2">
    <property type="interactions" value="14"/>
</dbReference>
<dbReference type="STRING" id="511145.b4566"/>
<dbReference type="PaxDb" id="511145-b4566"/>
<dbReference type="EnsemblBacteria" id="ABD18718">
    <property type="protein sequence ID" value="ABD18718"/>
    <property type="gene ID" value="b4566"/>
</dbReference>
<dbReference type="GeneID" id="1450297"/>
<dbReference type="KEGG" id="ecj:JW5968"/>
<dbReference type="KEGG" id="eco:b4566"/>
<dbReference type="KEGG" id="ecoc:C3026_23245"/>
<dbReference type="PATRIC" id="fig|511145.12.peg.4445"/>
<dbReference type="eggNOG" id="COG3811">
    <property type="taxonomic scope" value="Bacteria"/>
</dbReference>
<dbReference type="HOGENOM" id="CLU_164736_0_0_6"/>
<dbReference type="InParanoid" id="Q2EEU2"/>
<dbReference type="OMA" id="HPYRITE"/>
<dbReference type="OrthoDB" id="7204880at2"/>
<dbReference type="PhylomeDB" id="Q2EEU2"/>
<dbReference type="BioCyc" id="EcoCyc:MONOMER0-2695"/>
<dbReference type="PRO" id="PR:Q2EEU2"/>
<dbReference type="Proteomes" id="UP000000625">
    <property type="component" value="Chromosome"/>
</dbReference>
<dbReference type="GO" id="GO:0044547">
    <property type="term" value="F:DNA topoisomerase binding"/>
    <property type="evidence" value="ECO:0000314"/>
    <property type="project" value="EcoCyc"/>
</dbReference>
<dbReference type="HAMAP" id="MF_00827">
    <property type="entry name" value="UPF0386"/>
    <property type="match status" value="1"/>
</dbReference>
<dbReference type="InterPro" id="IPR018654">
    <property type="entry name" value="YjhX_toxin"/>
</dbReference>
<dbReference type="NCBIfam" id="NF010240">
    <property type="entry name" value="PRK13687.1"/>
    <property type="match status" value="1"/>
</dbReference>
<dbReference type="Pfam" id="PF09857">
    <property type="entry name" value="YjhX_toxin"/>
    <property type="match status" value="1"/>
</dbReference>
<reference key="1">
    <citation type="journal article" date="1997" name="Science">
        <title>The complete genome sequence of Escherichia coli K-12.</title>
        <authorList>
            <person name="Blattner F.R."/>
            <person name="Plunkett G. III"/>
            <person name="Bloch C.A."/>
            <person name="Perna N.T."/>
            <person name="Burland V."/>
            <person name="Riley M."/>
            <person name="Collado-Vides J."/>
            <person name="Glasner J.D."/>
            <person name="Rode C.K."/>
            <person name="Mayhew G.F."/>
            <person name="Gregor J."/>
            <person name="Davis N.W."/>
            <person name="Kirkpatrick H.A."/>
            <person name="Goeden M.A."/>
            <person name="Rose D.J."/>
            <person name="Mau B."/>
            <person name="Shao Y."/>
        </authorList>
    </citation>
    <scope>NUCLEOTIDE SEQUENCE [LARGE SCALE GENOMIC DNA]</scope>
    <source>
        <strain>K12 / MG1655 / ATCC 47076</strain>
    </source>
</reference>
<reference key="2">
    <citation type="journal article" date="2006" name="Mol. Syst. Biol.">
        <title>Highly accurate genome sequences of Escherichia coli K-12 strains MG1655 and W3110.</title>
        <authorList>
            <person name="Hayashi K."/>
            <person name="Morooka N."/>
            <person name="Yamamoto Y."/>
            <person name="Fujita K."/>
            <person name="Isono K."/>
            <person name="Choi S."/>
            <person name="Ohtsubo E."/>
            <person name="Baba T."/>
            <person name="Wanner B.L."/>
            <person name="Mori H."/>
            <person name="Horiuchi T."/>
        </authorList>
    </citation>
    <scope>NUCLEOTIDE SEQUENCE [LARGE SCALE GENOMIC DNA]</scope>
    <source>
        <strain>K12 / W3110 / ATCC 27325 / DSM 5911</strain>
    </source>
</reference>
<accession>Q2EEU2</accession>
<accession>Q2M606</accession>
<evidence type="ECO:0000255" key="1">
    <source>
        <dbReference type="HAMAP-Rule" id="MF_00827"/>
    </source>
</evidence>
<comment type="similarity">
    <text evidence="1">Belongs to the UPF0386 family.</text>
</comment>
<organism>
    <name type="scientific">Escherichia coli (strain K12)</name>
    <dbReference type="NCBI Taxonomy" id="83333"/>
    <lineage>
        <taxon>Bacteria</taxon>
        <taxon>Pseudomonadati</taxon>
        <taxon>Pseudomonadota</taxon>
        <taxon>Gammaproteobacteria</taxon>
        <taxon>Enterobacterales</taxon>
        <taxon>Enterobacteriaceae</taxon>
        <taxon>Escherichia</taxon>
    </lineage>
</organism>
<sequence length="85" mass="9734">MNLSRQEQHTLHVLAKGRRIAHVRDSSGRVTSVECYSREGLLLTDCTLAVFKKLKTKKLIKSVNGQPYRINTTELNKVRAQLDNR</sequence>
<name>YJHX_ECOLI</name>
<protein>
    <recommendedName>
        <fullName evidence="1">UPF0386 protein YjhX</fullName>
    </recommendedName>
</protein>
<gene>
    <name evidence="1" type="primary">yjhX</name>
    <name type="ordered locus">b4566</name>
    <name type="ordered locus">JW5968</name>
</gene>